<gene>
    <name evidence="1" type="primary">purM</name>
    <name type="ordered locus">XCV3104</name>
</gene>
<comment type="catalytic activity">
    <reaction evidence="1">
        <text>2-formamido-N(1)-(5-O-phospho-beta-D-ribosyl)acetamidine + ATP = 5-amino-1-(5-phospho-beta-D-ribosyl)imidazole + ADP + phosphate + H(+)</text>
        <dbReference type="Rhea" id="RHEA:23032"/>
        <dbReference type="ChEBI" id="CHEBI:15378"/>
        <dbReference type="ChEBI" id="CHEBI:30616"/>
        <dbReference type="ChEBI" id="CHEBI:43474"/>
        <dbReference type="ChEBI" id="CHEBI:137981"/>
        <dbReference type="ChEBI" id="CHEBI:147287"/>
        <dbReference type="ChEBI" id="CHEBI:456216"/>
        <dbReference type="EC" id="6.3.3.1"/>
    </reaction>
</comment>
<comment type="pathway">
    <text evidence="1">Purine metabolism; IMP biosynthesis via de novo pathway; 5-amino-1-(5-phospho-D-ribosyl)imidazole from N(2)-formyl-N(1)-(5-phospho-D-ribosyl)glycinamide: step 2/2.</text>
</comment>
<comment type="subcellular location">
    <subcellularLocation>
        <location evidence="1">Cytoplasm</location>
    </subcellularLocation>
</comment>
<comment type="similarity">
    <text evidence="1">Belongs to the AIR synthase family.</text>
</comment>
<protein>
    <recommendedName>
        <fullName evidence="1">Phosphoribosylformylglycinamidine cyclo-ligase</fullName>
        <ecNumber evidence="1">6.3.3.1</ecNumber>
    </recommendedName>
    <alternativeName>
        <fullName evidence="1">AIR synthase</fullName>
    </alternativeName>
    <alternativeName>
        <fullName evidence="1">AIRS</fullName>
    </alternativeName>
    <alternativeName>
        <fullName evidence="1">Phosphoribosyl-aminoimidazole synthetase</fullName>
    </alternativeName>
</protein>
<keyword id="KW-0067">ATP-binding</keyword>
<keyword id="KW-0963">Cytoplasm</keyword>
<keyword id="KW-0436">Ligase</keyword>
<keyword id="KW-0547">Nucleotide-binding</keyword>
<keyword id="KW-0658">Purine biosynthesis</keyword>
<dbReference type="EC" id="6.3.3.1" evidence="1"/>
<dbReference type="EMBL" id="AM039952">
    <property type="protein sequence ID" value="CAJ24835.1"/>
    <property type="molecule type" value="Genomic_DNA"/>
</dbReference>
<dbReference type="RefSeq" id="WP_011348138.1">
    <property type="nucleotide sequence ID" value="NZ_CP017190.1"/>
</dbReference>
<dbReference type="SMR" id="Q3BQX8"/>
<dbReference type="STRING" id="456327.BJD11_07305"/>
<dbReference type="KEGG" id="xcv:XCV3104"/>
<dbReference type="eggNOG" id="COG0150">
    <property type="taxonomic scope" value="Bacteria"/>
</dbReference>
<dbReference type="HOGENOM" id="CLU_047116_0_0_6"/>
<dbReference type="UniPathway" id="UPA00074">
    <property type="reaction ID" value="UER00129"/>
</dbReference>
<dbReference type="Proteomes" id="UP000007069">
    <property type="component" value="Chromosome"/>
</dbReference>
<dbReference type="GO" id="GO:0005829">
    <property type="term" value="C:cytosol"/>
    <property type="evidence" value="ECO:0007669"/>
    <property type="project" value="TreeGrafter"/>
</dbReference>
<dbReference type="GO" id="GO:0005524">
    <property type="term" value="F:ATP binding"/>
    <property type="evidence" value="ECO:0007669"/>
    <property type="project" value="UniProtKB-KW"/>
</dbReference>
<dbReference type="GO" id="GO:0004637">
    <property type="term" value="F:phosphoribosylamine-glycine ligase activity"/>
    <property type="evidence" value="ECO:0007669"/>
    <property type="project" value="TreeGrafter"/>
</dbReference>
<dbReference type="GO" id="GO:0004641">
    <property type="term" value="F:phosphoribosylformylglycinamidine cyclo-ligase activity"/>
    <property type="evidence" value="ECO:0007669"/>
    <property type="project" value="UniProtKB-UniRule"/>
</dbReference>
<dbReference type="GO" id="GO:0006189">
    <property type="term" value="P:'de novo' IMP biosynthetic process"/>
    <property type="evidence" value="ECO:0007669"/>
    <property type="project" value="UniProtKB-UniRule"/>
</dbReference>
<dbReference type="GO" id="GO:0046084">
    <property type="term" value="P:adenine biosynthetic process"/>
    <property type="evidence" value="ECO:0007669"/>
    <property type="project" value="TreeGrafter"/>
</dbReference>
<dbReference type="CDD" id="cd02196">
    <property type="entry name" value="PurM"/>
    <property type="match status" value="1"/>
</dbReference>
<dbReference type="FunFam" id="3.30.1330.10:FF:000001">
    <property type="entry name" value="Phosphoribosylformylglycinamidine cyclo-ligase"/>
    <property type="match status" value="1"/>
</dbReference>
<dbReference type="FunFam" id="3.90.650.10:FF:000001">
    <property type="entry name" value="Phosphoribosylformylglycinamidine cyclo-ligase"/>
    <property type="match status" value="1"/>
</dbReference>
<dbReference type="Gene3D" id="3.90.650.10">
    <property type="entry name" value="PurM-like C-terminal domain"/>
    <property type="match status" value="1"/>
</dbReference>
<dbReference type="Gene3D" id="3.30.1330.10">
    <property type="entry name" value="PurM-like, N-terminal domain"/>
    <property type="match status" value="1"/>
</dbReference>
<dbReference type="HAMAP" id="MF_00741">
    <property type="entry name" value="AIRS"/>
    <property type="match status" value="1"/>
</dbReference>
<dbReference type="InterPro" id="IPR010918">
    <property type="entry name" value="PurM-like_C_dom"/>
</dbReference>
<dbReference type="InterPro" id="IPR036676">
    <property type="entry name" value="PurM-like_C_sf"/>
</dbReference>
<dbReference type="InterPro" id="IPR016188">
    <property type="entry name" value="PurM-like_N"/>
</dbReference>
<dbReference type="InterPro" id="IPR036921">
    <property type="entry name" value="PurM-like_N_sf"/>
</dbReference>
<dbReference type="InterPro" id="IPR004733">
    <property type="entry name" value="PurM_cligase"/>
</dbReference>
<dbReference type="NCBIfam" id="TIGR00878">
    <property type="entry name" value="purM"/>
    <property type="match status" value="1"/>
</dbReference>
<dbReference type="PANTHER" id="PTHR10520:SF12">
    <property type="entry name" value="TRIFUNCTIONAL PURINE BIOSYNTHETIC PROTEIN ADENOSINE-3"/>
    <property type="match status" value="1"/>
</dbReference>
<dbReference type="PANTHER" id="PTHR10520">
    <property type="entry name" value="TRIFUNCTIONAL PURINE BIOSYNTHETIC PROTEIN ADENOSINE-3-RELATED"/>
    <property type="match status" value="1"/>
</dbReference>
<dbReference type="Pfam" id="PF00586">
    <property type="entry name" value="AIRS"/>
    <property type="match status" value="1"/>
</dbReference>
<dbReference type="Pfam" id="PF02769">
    <property type="entry name" value="AIRS_C"/>
    <property type="match status" value="1"/>
</dbReference>
<dbReference type="SUPFAM" id="SSF56042">
    <property type="entry name" value="PurM C-terminal domain-like"/>
    <property type="match status" value="1"/>
</dbReference>
<dbReference type="SUPFAM" id="SSF55326">
    <property type="entry name" value="PurM N-terminal domain-like"/>
    <property type="match status" value="1"/>
</dbReference>
<reference key="1">
    <citation type="journal article" date="2005" name="J. Bacteriol.">
        <title>Insights into genome plasticity and pathogenicity of the plant pathogenic Bacterium Xanthomonas campestris pv. vesicatoria revealed by the complete genome sequence.</title>
        <authorList>
            <person name="Thieme F."/>
            <person name="Koebnik R."/>
            <person name="Bekel T."/>
            <person name="Berger C."/>
            <person name="Boch J."/>
            <person name="Buettner D."/>
            <person name="Caldana C."/>
            <person name="Gaigalat L."/>
            <person name="Goesmann A."/>
            <person name="Kay S."/>
            <person name="Kirchner O."/>
            <person name="Lanz C."/>
            <person name="Linke B."/>
            <person name="McHardy A.C."/>
            <person name="Meyer F."/>
            <person name="Mittenhuber G."/>
            <person name="Nies D.H."/>
            <person name="Niesbach-Kloesgen U."/>
            <person name="Patschkowski T."/>
            <person name="Rueckert C."/>
            <person name="Rupp O."/>
            <person name="Schneiker S."/>
            <person name="Schuster S.C."/>
            <person name="Vorhoelter F.J."/>
            <person name="Weber E."/>
            <person name="Puehler A."/>
            <person name="Bonas U."/>
            <person name="Bartels D."/>
            <person name="Kaiser O."/>
        </authorList>
    </citation>
    <scope>NUCLEOTIDE SEQUENCE [LARGE SCALE GENOMIC DNA]</scope>
    <source>
        <strain>85-10</strain>
    </source>
</reference>
<evidence type="ECO:0000255" key="1">
    <source>
        <dbReference type="HAMAP-Rule" id="MF_00741"/>
    </source>
</evidence>
<feature type="chain" id="PRO_0000258430" description="Phosphoribosylformylglycinamidine cyclo-ligase">
    <location>
        <begin position="1"/>
        <end position="341"/>
    </location>
</feature>
<accession>Q3BQX8</accession>
<proteinExistence type="inferred from homology"/>
<name>PUR5_XANE5</name>
<sequence>MTYRDAGVDIDAGNALVERIKPLVKRSFRPEVMGGLGGFGALFDLSGKYKEPVLVSGTDGVGTKLKLAQQLGRHDTIGIDLVGMCVNDVLVQGAEPLFFLDYFATGKLDVDTAAAVVGGIARGCELSGCALIGGETAEMPDMYPPGEYDLAGFTVGAVEKSQLLDGAQVRDGDVLIGIASSGPHSNGYSLIRKIYERAGAPAEHVLDDGTKLIDALMAPTALYVKPVLSLLKSHGEAIHAMAHITGGGLTENIIRVIPQGLGLDIDATAWTLPPVFAWLQREGAVADAEMWRTFNCGIGFVLIASLEQAATLEQALDAQSLAHWRIGQVVPAHGDERVRIG</sequence>
<organism>
    <name type="scientific">Xanthomonas euvesicatoria pv. vesicatoria (strain 85-10)</name>
    <name type="common">Xanthomonas campestris pv. vesicatoria</name>
    <dbReference type="NCBI Taxonomy" id="316273"/>
    <lineage>
        <taxon>Bacteria</taxon>
        <taxon>Pseudomonadati</taxon>
        <taxon>Pseudomonadota</taxon>
        <taxon>Gammaproteobacteria</taxon>
        <taxon>Lysobacterales</taxon>
        <taxon>Lysobacteraceae</taxon>
        <taxon>Xanthomonas</taxon>
    </lineage>
</organism>